<accession>P33198</accession>
<protein>
    <recommendedName>
        <fullName>Isocitrate dehydrogenase [NADP], mitochondrial</fullName>
        <shortName>IDH</shortName>
        <ecNumber evidence="5">1.1.1.42</ecNumber>
    </recommendedName>
    <alternativeName>
        <fullName>ICD-M</fullName>
    </alternativeName>
    <alternativeName>
        <fullName>IDP</fullName>
    </alternativeName>
    <alternativeName>
        <fullName>NADP(+)-specific ICDH</fullName>
    </alternativeName>
    <alternativeName>
        <fullName>Oxalosuccinate decarboxylase</fullName>
    </alternativeName>
</protein>
<feature type="transit peptide" description="Mitochondrion">
    <location>
        <begin position="1" status="less than"/>
        <end position="8"/>
    </location>
</feature>
<feature type="chain" id="PRO_0000014422" description="Isocitrate dehydrogenase [NADP], mitochondrial">
    <location>
        <begin position="9"/>
        <end position="421"/>
    </location>
</feature>
<feature type="binding site" evidence="1">
    <location>
        <begin position="84"/>
        <end position="86"/>
    </location>
    <ligand>
        <name>NADP(+)</name>
        <dbReference type="ChEBI" id="CHEBI:58349"/>
    </ligand>
</feature>
<feature type="binding site" evidence="4 8">
    <location>
        <position position="86"/>
    </location>
    <ligand>
        <name>D-threo-isocitrate</name>
        <dbReference type="ChEBI" id="CHEBI:15562"/>
    </ligand>
</feature>
<feature type="binding site" evidence="1">
    <location>
        <position position="91"/>
    </location>
    <ligand>
        <name>NADP(+)</name>
        <dbReference type="ChEBI" id="CHEBI:58349"/>
    </ligand>
</feature>
<feature type="binding site" evidence="4 8">
    <location>
        <begin position="103"/>
        <end position="109"/>
    </location>
    <ligand>
        <name>D-threo-isocitrate</name>
        <dbReference type="ChEBI" id="CHEBI:15562"/>
    </ligand>
</feature>
<feature type="binding site" evidence="4 8">
    <location>
        <position position="118"/>
    </location>
    <ligand>
        <name>D-threo-isocitrate</name>
        <dbReference type="ChEBI" id="CHEBI:15562"/>
    </ligand>
</feature>
<feature type="binding site" evidence="4 8">
    <location>
        <position position="141"/>
    </location>
    <ligand>
        <name>D-threo-isocitrate</name>
        <dbReference type="ChEBI" id="CHEBI:15562"/>
    </ligand>
</feature>
<feature type="binding site" evidence="4 8">
    <location>
        <position position="260"/>
    </location>
    <ligand>
        <name>Mn(2+)</name>
        <dbReference type="ChEBI" id="CHEBI:29035"/>
    </ligand>
</feature>
<feature type="binding site" evidence="1">
    <location>
        <position position="268"/>
    </location>
    <ligand>
        <name>NADP(+)</name>
        <dbReference type="ChEBI" id="CHEBI:58349"/>
    </ligand>
</feature>
<feature type="binding site" evidence="4 8">
    <location>
        <position position="283"/>
    </location>
    <ligand>
        <name>Mn(2+)</name>
        <dbReference type="ChEBI" id="CHEBI:29035"/>
    </ligand>
</feature>
<feature type="binding site" evidence="1">
    <location>
        <begin position="318"/>
        <end position="323"/>
    </location>
    <ligand>
        <name>NADP(+)</name>
        <dbReference type="ChEBI" id="CHEBI:58349"/>
    </ligand>
</feature>
<feature type="binding site" evidence="1">
    <location>
        <position position="336"/>
    </location>
    <ligand>
        <name>NADP(+)</name>
        <dbReference type="ChEBI" id="CHEBI:58349"/>
    </ligand>
</feature>
<feature type="site" description="Critical for catalysis" evidence="5">
    <location>
        <position position="148"/>
    </location>
</feature>
<feature type="site" description="Critical for catalysis" evidence="5">
    <location>
        <position position="220"/>
    </location>
</feature>
<feature type="modified residue" description="N6-acetyllysine" evidence="3">
    <location>
        <position position="14"/>
    </location>
</feature>
<feature type="modified residue" description="N6-acetyllysine" evidence="3">
    <location>
        <position position="17"/>
    </location>
</feature>
<feature type="modified residue" description="N6-acetyllysine" evidence="2">
    <location>
        <position position="36"/>
    </location>
</feature>
<feature type="modified residue" description="N6-acetyllysine" evidence="3">
    <location>
        <position position="38"/>
    </location>
</feature>
<feature type="modified residue" description="N6-acetyllysine; alternate" evidence="3">
    <location>
        <position position="49"/>
    </location>
</feature>
<feature type="modified residue" description="N6-succinyllysine; alternate" evidence="3">
    <location>
        <position position="49"/>
    </location>
</feature>
<feature type="modified residue" description="N6-acetyllysine; alternate" evidence="2">
    <location>
        <position position="75"/>
    </location>
</feature>
<feature type="modified residue" description="N6-succinyllysine; alternate" evidence="3">
    <location>
        <position position="75"/>
    </location>
</feature>
<feature type="modified residue" description="N6-acetyllysine" evidence="2">
    <location>
        <position position="124"/>
    </location>
</feature>
<feature type="modified residue" description="N6-acetyllysine; alternate" evidence="2">
    <location>
        <position position="135"/>
    </location>
</feature>
<feature type="modified residue" description="N6-succinyllysine; alternate" evidence="3">
    <location>
        <position position="135"/>
    </location>
</feature>
<feature type="modified residue" description="N6-acetyllysine; alternate" evidence="2">
    <location>
        <position position="149"/>
    </location>
</feature>
<feature type="modified residue" description="N6-succinyllysine; alternate" evidence="3">
    <location>
        <position position="149"/>
    </location>
</feature>
<feature type="modified residue" description="N6-acetyllysine; alternate" evidence="3">
    <location>
        <position position="162"/>
    </location>
</feature>
<feature type="modified residue" description="N6-succinyllysine; alternate" evidence="3">
    <location>
        <position position="162"/>
    </location>
</feature>
<feature type="modified residue" description="N6-acetyllysine" evidence="3">
    <location>
        <position position="168"/>
    </location>
</feature>
<feature type="modified residue" description="N6-acetyllysine; alternate" evidence="2">
    <location>
        <position position="225"/>
    </location>
</feature>
<feature type="modified residue" description="N6-succinyllysine; alternate" evidence="3">
    <location>
        <position position="225"/>
    </location>
</feature>
<feature type="modified residue" description="N6-acetyllysine" evidence="2">
    <location>
        <position position="232"/>
    </location>
</feature>
<feature type="modified residue" description="N6-acetyllysine" evidence="2">
    <location>
        <position position="241"/>
    </location>
</feature>
<feature type="modified residue" description="N6-acetyllysine" evidence="2">
    <location>
        <position position="244"/>
    </location>
</feature>
<feature type="modified residue" description="N6-acetyllysine" evidence="3">
    <location>
        <position position="249"/>
    </location>
</feature>
<feature type="modified residue" description="N6-acetyllysine; alternate" evidence="2">
    <location>
        <position position="251"/>
    </location>
</feature>
<feature type="modified residue" description="N6-succinyllysine; alternate" evidence="3">
    <location>
        <position position="251"/>
    </location>
</feature>
<feature type="modified residue" description="N6-acetyllysine; alternate" evidence="3">
    <location>
        <position position="353"/>
    </location>
</feature>
<feature type="modified residue" description="N6-succinyllysine; alternate" evidence="3">
    <location>
        <position position="353"/>
    </location>
</feature>
<feature type="modified residue" description="N6-acetyllysine" evidence="3">
    <location>
        <position position="369"/>
    </location>
</feature>
<feature type="modified residue" description="N6-acetyllysine" evidence="2">
    <location>
        <position position="382"/>
    </location>
</feature>
<feature type="modified residue" description="N6-acetyllysine" evidence="2">
    <location>
        <position position="411"/>
    </location>
</feature>
<feature type="mutagenesis site" description="Large decrease in Vmax and insignificant change in KM for isocitrate and NADP." evidence="5">
    <original>Y</original>
    <variation>F</variation>
    <location>
        <position position="148"/>
    </location>
</feature>
<feature type="mutagenesis site" description="Large decrease in Vmax and insignificant change in KM for isocitrate and NADP." evidence="5">
    <original>K</original>
    <variation>Q</variation>
    <variation>Y</variation>
    <location>
        <position position="220"/>
    </location>
</feature>
<feature type="non-terminal residue">
    <location>
        <position position="1"/>
    </location>
</feature>
<feature type="strand" evidence="9">
    <location>
        <begin position="19"/>
        <end position="23"/>
    </location>
</feature>
<feature type="helix" evidence="9">
    <location>
        <begin position="26"/>
        <end position="38"/>
    </location>
</feature>
<feature type="turn" evidence="9">
    <location>
        <begin position="39"/>
        <end position="43"/>
    </location>
</feature>
<feature type="strand" evidence="9">
    <location>
        <begin position="48"/>
        <end position="52"/>
    </location>
</feature>
<feature type="helix" evidence="9">
    <location>
        <begin position="55"/>
        <end position="60"/>
    </location>
</feature>
<feature type="turn" evidence="9">
    <location>
        <begin position="61"/>
        <end position="63"/>
    </location>
</feature>
<feature type="helix" evidence="9">
    <location>
        <begin position="64"/>
        <end position="76"/>
    </location>
</feature>
<feature type="strand" evidence="9">
    <location>
        <begin position="77"/>
        <end position="81"/>
    </location>
</feature>
<feature type="helix" evidence="9">
    <location>
        <begin position="89"/>
        <end position="95"/>
    </location>
</feature>
<feature type="helix" evidence="9">
    <location>
        <begin position="104"/>
        <end position="112"/>
    </location>
</feature>
<feature type="strand" evidence="9">
    <location>
        <begin position="114"/>
        <end position="120"/>
    </location>
</feature>
<feature type="strand" evidence="9">
    <location>
        <begin position="137"/>
        <end position="142"/>
    </location>
</feature>
<feature type="helix" evidence="9">
    <location>
        <begin position="146"/>
        <end position="149"/>
    </location>
</feature>
<feature type="strand" evidence="9">
    <location>
        <begin position="151"/>
        <end position="155"/>
    </location>
</feature>
<feature type="strand" evidence="9">
    <location>
        <begin position="157"/>
        <end position="167"/>
    </location>
</feature>
<feature type="strand" evidence="9">
    <location>
        <begin position="174"/>
        <end position="183"/>
    </location>
</feature>
<feature type="strand" evidence="9">
    <location>
        <begin position="185"/>
        <end position="193"/>
    </location>
</feature>
<feature type="helix" evidence="9">
    <location>
        <begin position="194"/>
        <end position="211"/>
    </location>
</feature>
<feature type="strand" evidence="9">
    <location>
        <begin position="215"/>
        <end position="219"/>
    </location>
</feature>
<feature type="turn" evidence="9">
    <location>
        <begin position="221"/>
        <end position="223"/>
    </location>
</feature>
<feature type="helix" evidence="9">
    <location>
        <begin position="227"/>
        <end position="242"/>
    </location>
</feature>
<feature type="helix" evidence="9">
    <location>
        <begin position="244"/>
        <end position="249"/>
    </location>
</feature>
<feature type="strand" evidence="9">
    <location>
        <begin position="254"/>
        <end position="258"/>
    </location>
</feature>
<feature type="helix" evidence="9">
    <location>
        <begin position="259"/>
        <end position="268"/>
    </location>
</feature>
<feature type="strand" evidence="9">
    <location>
        <begin position="273"/>
        <end position="277"/>
    </location>
</feature>
<feature type="helix" evidence="9">
    <location>
        <begin position="279"/>
        <end position="293"/>
    </location>
</feature>
<feature type="strand" evidence="9">
    <location>
        <begin position="298"/>
        <end position="304"/>
    </location>
</feature>
<feature type="strand" evidence="9">
    <location>
        <begin position="311"/>
        <end position="314"/>
    </location>
</feature>
<feature type="helix" evidence="9">
    <location>
        <begin position="321"/>
        <end position="328"/>
    </location>
</feature>
<feature type="helix" evidence="9">
    <location>
        <begin position="338"/>
        <end position="355"/>
    </location>
</feature>
<feature type="helix" evidence="9">
    <location>
        <begin position="358"/>
        <end position="376"/>
    </location>
</feature>
<feature type="helix" evidence="9">
    <location>
        <begin position="382"/>
        <end position="389"/>
    </location>
</feature>
<feature type="turn" evidence="9">
    <location>
        <begin position="396"/>
        <end position="398"/>
    </location>
</feature>
<feature type="helix" evidence="9">
    <location>
        <begin position="403"/>
        <end position="419"/>
    </location>
</feature>
<comment type="function">
    <text evidence="5">Plays a role in intermediary metabolism and energy production (PubMed:14512428). It may tightly associate or interact with the pyruvate dehydrogenase complex (PubMed:14512428).</text>
</comment>
<comment type="catalytic activity">
    <reaction evidence="5">
        <text>D-threo-isocitrate + NADP(+) = 2-oxoglutarate + CO2 + NADPH</text>
        <dbReference type="Rhea" id="RHEA:19629"/>
        <dbReference type="ChEBI" id="CHEBI:15562"/>
        <dbReference type="ChEBI" id="CHEBI:16526"/>
        <dbReference type="ChEBI" id="CHEBI:16810"/>
        <dbReference type="ChEBI" id="CHEBI:57783"/>
        <dbReference type="ChEBI" id="CHEBI:58349"/>
        <dbReference type="EC" id="1.1.1.42"/>
    </reaction>
</comment>
<comment type="cofactor">
    <cofactor evidence="4">
        <name>Mg(2+)</name>
        <dbReference type="ChEBI" id="CHEBI:18420"/>
    </cofactor>
    <cofactor evidence="4">
        <name>Mn(2+)</name>
        <dbReference type="ChEBI" id="CHEBI:29035"/>
    </cofactor>
    <text evidence="4">Binds 1 Mg(2+) or Mn(2+) ion per subunit.</text>
</comment>
<comment type="biophysicochemical properties">
    <kinetics>
        <KM evidence="5">7.47 uM for isocitrate</KM>
        <KM evidence="5">9.85 uM for NADP</KM>
        <KM evidence="5">0.11 uM for manganese</KM>
        <Vmax evidence="5">39.6 umol/min/mg enzyme with isocitrate as substrate</Vmax>
    </kinetics>
</comment>
<comment type="subunit">
    <text evidence="4">Homodimer.</text>
</comment>
<comment type="subcellular location">
    <subcellularLocation>
        <location evidence="7">Mitochondrion</location>
    </subcellularLocation>
</comment>
<comment type="PTM">
    <text evidence="2">Acetylation at Lys-382 dramatically reduces catalytic activity. Deacetylated by SIRT3 (By similarity).</text>
</comment>
<comment type="similarity">
    <text evidence="6">Belongs to the isocitrate and isopropylmalate dehydrogenases family.</text>
</comment>
<gene>
    <name type="primary">IDH2</name>
</gene>
<proteinExistence type="evidence at protein level"/>
<keyword id="KW-0002">3D-structure</keyword>
<keyword id="KW-0007">Acetylation</keyword>
<keyword id="KW-0903">Direct protein sequencing</keyword>
<keyword id="KW-0329">Glyoxylate bypass</keyword>
<keyword id="KW-0460">Magnesium</keyword>
<keyword id="KW-0464">Manganese</keyword>
<keyword id="KW-0479">Metal-binding</keyword>
<keyword id="KW-0496">Mitochondrion</keyword>
<keyword id="KW-0521">NADP</keyword>
<keyword id="KW-0560">Oxidoreductase</keyword>
<keyword id="KW-1185">Reference proteome</keyword>
<keyword id="KW-0809">Transit peptide</keyword>
<keyword id="KW-0816">Tricarboxylic acid cycle</keyword>
<sequence>ARAAARHYADQRIKVAKPVVEMDGDEMTRIIWQFIKEKLILPHVDVQLKYFDLGLPNRDQTNDQVTIDSALATQKYSVAVKCATITPDEARVEEFKLKKMWKSPNGTIRNILGGTVFREPIICKNIPRLVPGWTKPITIGRHAHGDQYKATDFVVDRAGTFKIVFTPKDGSSAKQWEVYNFPAGGVGMGMYNTDESISGFAHSCFQYAIQKKWPLYMSTKNTILKAYDGRFKDIFQEIFEKHYKTDFDKYKIWYEHRLIDDMVAQVLKSSGGFVWACKNYDGDVQSDILAQGFGSLGLMTSVLVCPDGKTIEAEAAHGTVTRHYREHQKGRPTSTNPIASIFAWTRGLEHRGKLDGNQDLIRFAQTLEKVCVETVESGAMTKDLAGCIHGLSNVKLNEHFLNTSDFLDTIKSNLDRALGRQ</sequence>
<name>IDHP_PIG</name>
<dbReference type="EC" id="1.1.1.42" evidence="5"/>
<dbReference type="EMBL" id="M86719">
    <property type="protein sequence ID" value="AAA31089.1"/>
    <property type="molecule type" value="mRNA"/>
</dbReference>
<dbReference type="PIR" id="A43294">
    <property type="entry name" value="A43294"/>
</dbReference>
<dbReference type="PDB" id="1LWD">
    <property type="method" value="X-ray"/>
    <property type="resolution" value="1.85 A"/>
    <property type="chains" value="A/B=9-421"/>
</dbReference>
<dbReference type="PDBsum" id="1LWD"/>
<dbReference type="SMR" id="P33198"/>
<dbReference type="FunCoup" id="P33198">
    <property type="interactions" value="78"/>
</dbReference>
<dbReference type="STRING" id="9823.ENSSSCP00000036736"/>
<dbReference type="PaxDb" id="9823-ENSSSCP00000002026"/>
<dbReference type="PeptideAtlas" id="P33198"/>
<dbReference type="eggNOG" id="KOG1526">
    <property type="taxonomic scope" value="Eukaryota"/>
</dbReference>
<dbReference type="HOGENOM" id="CLU_023296_1_1_1"/>
<dbReference type="InParanoid" id="P33198"/>
<dbReference type="OrthoDB" id="248923at2759"/>
<dbReference type="BRENDA" id="1.1.1.42">
    <property type="organism ID" value="6170"/>
</dbReference>
<dbReference type="SABIO-RK" id="P33198"/>
<dbReference type="EvolutionaryTrace" id="P33198"/>
<dbReference type="Proteomes" id="UP000008227">
    <property type="component" value="Unplaced"/>
</dbReference>
<dbReference type="Proteomes" id="UP000314985">
    <property type="component" value="Unplaced"/>
</dbReference>
<dbReference type="Proteomes" id="UP000694570">
    <property type="component" value="Unplaced"/>
</dbReference>
<dbReference type="Proteomes" id="UP000694571">
    <property type="component" value="Unplaced"/>
</dbReference>
<dbReference type="Proteomes" id="UP000694720">
    <property type="component" value="Unplaced"/>
</dbReference>
<dbReference type="Proteomes" id="UP000694722">
    <property type="component" value="Unplaced"/>
</dbReference>
<dbReference type="Proteomes" id="UP000694723">
    <property type="component" value="Unplaced"/>
</dbReference>
<dbReference type="Proteomes" id="UP000694724">
    <property type="component" value="Unplaced"/>
</dbReference>
<dbReference type="Proteomes" id="UP000694725">
    <property type="component" value="Unplaced"/>
</dbReference>
<dbReference type="Proteomes" id="UP000694726">
    <property type="component" value="Unplaced"/>
</dbReference>
<dbReference type="Proteomes" id="UP000694727">
    <property type="component" value="Unplaced"/>
</dbReference>
<dbReference type="Proteomes" id="UP000694728">
    <property type="component" value="Unplaced"/>
</dbReference>
<dbReference type="GO" id="GO:0005739">
    <property type="term" value="C:mitochondrion"/>
    <property type="evidence" value="ECO:0000318"/>
    <property type="project" value="GO_Central"/>
</dbReference>
<dbReference type="GO" id="GO:0004450">
    <property type="term" value="F:isocitrate dehydrogenase (NADP+) activity"/>
    <property type="evidence" value="ECO:0000250"/>
    <property type="project" value="UniProtKB"/>
</dbReference>
<dbReference type="GO" id="GO:0000287">
    <property type="term" value="F:magnesium ion binding"/>
    <property type="evidence" value="ECO:0000250"/>
    <property type="project" value="UniProtKB"/>
</dbReference>
<dbReference type="GO" id="GO:0051287">
    <property type="term" value="F:NAD binding"/>
    <property type="evidence" value="ECO:0007669"/>
    <property type="project" value="InterPro"/>
</dbReference>
<dbReference type="GO" id="GO:0006103">
    <property type="term" value="P:2-oxoglutarate metabolic process"/>
    <property type="evidence" value="ECO:0000250"/>
    <property type="project" value="UniProtKB"/>
</dbReference>
<dbReference type="GO" id="GO:0006097">
    <property type="term" value="P:glyoxylate cycle"/>
    <property type="evidence" value="ECO:0007669"/>
    <property type="project" value="UniProtKB-KW"/>
</dbReference>
<dbReference type="GO" id="GO:0006102">
    <property type="term" value="P:isocitrate metabolic process"/>
    <property type="evidence" value="ECO:0000250"/>
    <property type="project" value="UniProtKB"/>
</dbReference>
<dbReference type="GO" id="GO:0006739">
    <property type="term" value="P:NADP metabolic process"/>
    <property type="evidence" value="ECO:0000318"/>
    <property type="project" value="GO_Central"/>
</dbReference>
<dbReference type="GO" id="GO:0006099">
    <property type="term" value="P:tricarboxylic acid cycle"/>
    <property type="evidence" value="ECO:0007669"/>
    <property type="project" value="UniProtKB-KW"/>
</dbReference>
<dbReference type="FunFam" id="3.40.718.10:FF:000002">
    <property type="entry name" value="Isocitrate dehydrogenase [NADP]"/>
    <property type="match status" value="1"/>
</dbReference>
<dbReference type="Gene3D" id="3.40.718.10">
    <property type="entry name" value="Isopropylmalate Dehydrogenase"/>
    <property type="match status" value="1"/>
</dbReference>
<dbReference type="InterPro" id="IPR019818">
    <property type="entry name" value="IsoCit/isopropylmalate_DH_CS"/>
</dbReference>
<dbReference type="InterPro" id="IPR004790">
    <property type="entry name" value="Isocitrate_DH_NADP"/>
</dbReference>
<dbReference type="InterPro" id="IPR024084">
    <property type="entry name" value="IsoPropMal-DH-like_dom"/>
</dbReference>
<dbReference type="NCBIfam" id="TIGR00127">
    <property type="entry name" value="nadp_idh_euk"/>
    <property type="match status" value="1"/>
</dbReference>
<dbReference type="NCBIfam" id="NF006156">
    <property type="entry name" value="PRK08299.1"/>
    <property type="match status" value="1"/>
</dbReference>
<dbReference type="PANTHER" id="PTHR11822:SF21">
    <property type="entry name" value="ISOCITRATE DEHYDROGENASE [NADP], MITOCHONDRIAL"/>
    <property type="match status" value="1"/>
</dbReference>
<dbReference type="PANTHER" id="PTHR11822">
    <property type="entry name" value="NADP-SPECIFIC ISOCITRATE DEHYDROGENASE"/>
    <property type="match status" value="1"/>
</dbReference>
<dbReference type="Pfam" id="PF00180">
    <property type="entry name" value="Iso_dh"/>
    <property type="match status" value="1"/>
</dbReference>
<dbReference type="PIRSF" id="PIRSF000108">
    <property type="entry name" value="IDH_NADP"/>
    <property type="match status" value="1"/>
</dbReference>
<dbReference type="SMART" id="SM01329">
    <property type="entry name" value="Iso_dh"/>
    <property type="match status" value="1"/>
</dbReference>
<dbReference type="SUPFAM" id="SSF53659">
    <property type="entry name" value="Isocitrate/Isopropylmalate dehydrogenase-like"/>
    <property type="match status" value="1"/>
</dbReference>
<dbReference type="PROSITE" id="PS00470">
    <property type="entry name" value="IDH_IMDH"/>
    <property type="match status" value="1"/>
</dbReference>
<organism>
    <name type="scientific">Sus scrofa</name>
    <name type="common">Pig</name>
    <dbReference type="NCBI Taxonomy" id="9823"/>
    <lineage>
        <taxon>Eukaryota</taxon>
        <taxon>Metazoa</taxon>
        <taxon>Chordata</taxon>
        <taxon>Craniata</taxon>
        <taxon>Vertebrata</taxon>
        <taxon>Euteleostomi</taxon>
        <taxon>Mammalia</taxon>
        <taxon>Eutheria</taxon>
        <taxon>Laurasiatheria</taxon>
        <taxon>Artiodactyla</taxon>
        <taxon>Suina</taxon>
        <taxon>Suidae</taxon>
        <taxon>Sus</taxon>
    </lineage>
</organism>
<reference key="1">
    <citation type="journal article" date="1992" name="Biochemistry">
        <title>Isolation and sequence of a cDNA encoding porcine mitochondrial NADP-specific isocitrate dehydrogenase.</title>
        <authorList>
            <person name="Haselbeck R.J."/>
            <person name="Colman R.F."/>
            <person name="McAlister-Henn L."/>
        </authorList>
    </citation>
    <scope>NUCLEOTIDE SEQUENCE [MRNA]</scope>
</reference>
<reference key="2">
    <citation type="journal article" date="1991" name="J. Biol. Chem.">
        <title>Cysteinyl peptides of pig heart NADP-dependent isocitrate dehydrogenase that are modified upon inactivation by N-ethylmaleimide.</title>
        <authorList>
            <person name="Smyth G.E."/>
            <person name="Colman R.F."/>
        </authorList>
    </citation>
    <scope>PROTEIN SEQUENCE OF 82-91; 59-64; 201-211; 269-278 AND 369-392</scope>
    <scope>SUBCELLULAR LOCATION</scope>
    <source>
        <tissue>Heart</tissue>
    </source>
</reference>
<reference key="3">
    <citation type="journal article" date="1987" name="J. Biol. Chem.">
        <title>Characterization of an active site peptide modified by the substrate analogue 3-bromo-2-ketoglutarate on a single chain of dimeric NADP+-dependent isocitrate dehydrogenase.</title>
        <authorList>
            <person name="Ehrlich R.S."/>
            <person name="Colman R.F."/>
        </authorList>
    </citation>
    <scope>PROTEIN SEQUENCE OF 383-395</scope>
</reference>
<reference key="4">
    <citation type="journal article" date="2003" name="J. Biol. Chem.">
        <title>Critical role of Lys212 and Tyr140 in porcine NADP-dependent isocitrate dehydrogenase.</title>
        <authorList>
            <person name="Kim T.K."/>
            <person name="Lee P."/>
            <person name="Colman R.F."/>
        </authorList>
    </citation>
    <scope>FUNCTION</scope>
    <scope>CATALYTIC ACTIVITY</scope>
    <scope>BIOPHYSICOCHEMICAL PROPERTIES</scope>
    <scope>MUTAGENESIS OF TYR-148 AND LYS-220</scope>
</reference>
<reference key="5">
    <citation type="journal article" date="2002" name="J. Biol. Chem.">
        <title>Crystal structure of porcine mitochondrial NADP+-dependent isocitrate dehydrogenase complexed with Mn2+ and isocitrate. Insights into the enzyme mechanism.</title>
        <authorList>
            <person name="Ceccarelli C."/>
            <person name="Grodsky N.B."/>
            <person name="Ariyaratne N."/>
            <person name="Colman R.F."/>
            <person name="Bahnson B.J."/>
        </authorList>
    </citation>
    <scope>X-RAY CRYSTALLOGRAPHY (1.85 ANGSTROMS) OF 9-421 IN COMPLEX WITH MANGANESE AND ISOCITRATE</scope>
    <scope>COFACTOR</scope>
    <scope>SUBUNIT</scope>
</reference>
<evidence type="ECO:0000250" key="1">
    <source>
        <dbReference type="UniProtKB" id="O75874"/>
    </source>
</evidence>
<evidence type="ECO:0000250" key="2">
    <source>
        <dbReference type="UniProtKB" id="P48735"/>
    </source>
</evidence>
<evidence type="ECO:0000250" key="3">
    <source>
        <dbReference type="UniProtKB" id="P54071"/>
    </source>
</evidence>
<evidence type="ECO:0000269" key="4">
    <source>
    </source>
</evidence>
<evidence type="ECO:0000269" key="5">
    <source>
    </source>
</evidence>
<evidence type="ECO:0000305" key="6"/>
<evidence type="ECO:0000305" key="7">
    <source>
    </source>
</evidence>
<evidence type="ECO:0007744" key="8">
    <source>
        <dbReference type="PDB" id="1LWD"/>
    </source>
</evidence>
<evidence type="ECO:0007829" key="9">
    <source>
        <dbReference type="PDB" id="1LWD"/>
    </source>
</evidence>